<accession>A0LTN7</accession>
<proteinExistence type="inferred from homology"/>
<organism>
    <name type="scientific">Acidothermus cellulolyticus (strain ATCC 43068 / DSM 8971 / 11B)</name>
    <dbReference type="NCBI Taxonomy" id="351607"/>
    <lineage>
        <taxon>Bacteria</taxon>
        <taxon>Bacillati</taxon>
        <taxon>Actinomycetota</taxon>
        <taxon>Actinomycetes</taxon>
        <taxon>Acidothermales</taxon>
        <taxon>Acidothermaceae</taxon>
        <taxon>Acidothermus</taxon>
    </lineage>
</organism>
<name>SEPF_ACIC1</name>
<reference key="1">
    <citation type="journal article" date="2009" name="Genome Res.">
        <title>Complete genome of the cellulolytic thermophile Acidothermus cellulolyticus 11B provides insights into its ecophysiological and evolutionary adaptations.</title>
        <authorList>
            <person name="Barabote R.D."/>
            <person name="Xie G."/>
            <person name="Leu D.H."/>
            <person name="Normand P."/>
            <person name="Necsulea A."/>
            <person name="Daubin V."/>
            <person name="Medigue C."/>
            <person name="Adney W.S."/>
            <person name="Xu X.C."/>
            <person name="Lapidus A."/>
            <person name="Parales R.E."/>
            <person name="Detter C."/>
            <person name="Pujic P."/>
            <person name="Bruce D."/>
            <person name="Lavire C."/>
            <person name="Challacombe J.F."/>
            <person name="Brettin T.S."/>
            <person name="Berry A.M."/>
        </authorList>
    </citation>
    <scope>NUCLEOTIDE SEQUENCE [LARGE SCALE GENOMIC DNA]</scope>
    <source>
        <strain>ATCC 43068 / DSM 8971 / 11B</strain>
    </source>
</reference>
<protein>
    <recommendedName>
        <fullName evidence="1">Cell division protein SepF</fullName>
    </recommendedName>
</protein>
<evidence type="ECO:0000255" key="1">
    <source>
        <dbReference type="HAMAP-Rule" id="MF_01197"/>
    </source>
</evidence>
<evidence type="ECO:0000256" key="2">
    <source>
        <dbReference type="SAM" id="MobiDB-lite"/>
    </source>
</evidence>
<comment type="function">
    <text evidence="1">Cell division protein that is part of the divisome complex and is recruited early to the Z-ring. Probably stimulates Z-ring formation, perhaps through the cross-linking of FtsZ protofilaments. Its function overlaps with FtsA.</text>
</comment>
<comment type="subunit">
    <text evidence="1">Homodimer. Interacts with FtsZ.</text>
</comment>
<comment type="subcellular location">
    <subcellularLocation>
        <location evidence="1">Cytoplasm</location>
    </subcellularLocation>
    <text evidence="1">Localizes to the division site, in a FtsZ-dependent manner.</text>
</comment>
<comment type="similarity">
    <text evidence="1">Belongs to the SepF family.</text>
</comment>
<keyword id="KW-0131">Cell cycle</keyword>
<keyword id="KW-0132">Cell division</keyword>
<keyword id="KW-0963">Cytoplasm</keyword>
<keyword id="KW-1185">Reference proteome</keyword>
<keyword id="KW-0717">Septation</keyword>
<gene>
    <name evidence="1" type="primary">sepF</name>
    <name type="ordered locus">Acel_1024</name>
</gene>
<feature type="chain" id="PRO_0000333967" description="Cell division protein SepF">
    <location>
        <begin position="1"/>
        <end position="175"/>
    </location>
</feature>
<feature type="region of interest" description="Disordered" evidence="2">
    <location>
        <begin position="20"/>
        <end position="88"/>
    </location>
</feature>
<feature type="compositionally biased region" description="Acidic residues" evidence="2">
    <location>
        <begin position="20"/>
        <end position="29"/>
    </location>
</feature>
<feature type="compositionally biased region" description="Basic and acidic residues" evidence="2">
    <location>
        <begin position="30"/>
        <end position="47"/>
    </location>
</feature>
<feature type="compositionally biased region" description="Basic and acidic residues" evidence="2">
    <location>
        <begin position="54"/>
        <end position="73"/>
    </location>
</feature>
<sequence length="175" mass="19996">MAFMRKAAVYLGLVEDDEERYEDYDDYDDAEPHRREPREAVERDLGSRRTAVVRRMDARESSPADPAELRRVSEPAPTERPTPPLRVTTLHPRTYNEARAIGEHFREGIPVIMNLTEMDDADAKRLVDFAAGLTFGLRGSIERITSKVFLLSPRNVEVTAEDKRRMAEGGFFNQS</sequence>
<dbReference type="EMBL" id="CP000481">
    <property type="protein sequence ID" value="ABK52797.1"/>
    <property type="molecule type" value="Genomic_DNA"/>
</dbReference>
<dbReference type="RefSeq" id="WP_011719860.1">
    <property type="nucleotide sequence ID" value="NC_008578.1"/>
</dbReference>
<dbReference type="SMR" id="A0LTN7"/>
<dbReference type="STRING" id="351607.Acel_1024"/>
<dbReference type="KEGG" id="ace:Acel_1024"/>
<dbReference type="eggNOG" id="COG1799">
    <property type="taxonomic scope" value="Bacteria"/>
</dbReference>
<dbReference type="HOGENOM" id="CLU_078499_0_0_11"/>
<dbReference type="InParanoid" id="A0LTN7"/>
<dbReference type="OrthoDB" id="3731101at2"/>
<dbReference type="Proteomes" id="UP000008221">
    <property type="component" value="Chromosome"/>
</dbReference>
<dbReference type="GO" id="GO:0005737">
    <property type="term" value="C:cytoplasm"/>
    <property type="evidence" value="ECO:0007669"/>
    <property type="project" value="UniProtKB-SubCell"/>
</dbReference>
<dbReference type="GO" id="GO:0000917">
    <property type="term" value="P:division septum assembly"/>
    <property type="evidence" value="ECO:0007669"/>
    <property type="project" value="UniProtKB-KW"/>
</dbReference>
<dbReference type="GO" id="GO:0043093">
    <property type="term" value="P:FtsZ-dependent cytokinesis"/>
    <property type="evidence" value="ECO:0007669"/>
    <property type="project" value="UniProtKB-UniRule"/>
</dbReference>
<dbReference type="Gene3D" id="3.30.110.150">
    <property type="entry name" value="SepF-like protein"/>
    <property type="match status" value="1"/>
</dbReference>
<dbReference type="HAMAP" id="MF_01197">
    <property type="entry name" value="SepF"/>
    <property type="match status" value="1"/>
</dbReference>
<dbReference type="InterPro" id="IPR023052">
    <property type="entry name" value="Cell_div_SepF"/>
</dbReference>
<dbReference type="InterPro" id="IPR007561">
    <property type="entry name" value="Cell_div_SepF/SepF-rel"/>
</dbReference>
<dbReference type="InterPro" id="IPR038594">
    <property type="entry name" value="SepF-like_sf"/>
</dbReference>
<dbReference type="PANTHER" id="PTHR35798">
    <property type="entry name" value="CELL DIVISION PROTEIN SEPF"/>
    <property type="match status" value="1"/>
</dbReference>
<dbReference type="PANTHER" id="PTHR35798:SF1">
    <property type="entry name" value="CELL DIVISION PROTEIN SEPF"/>
    <property type="match status" value="1"/>
</dbReference>
<dbReference type="Pfam" id="PF04472">
    <property type="entry name" value="SepF"/>
    <property type="match status" value="1"/>
</dbReference>